<sequence length="448" mass="48652">MKKEKTERTKQSWRKAQNAPSLSEVNNSVAIPKNAKFFRKLFAFMGPGALIAVGYVDPGNWATSIAGGSEFGYTLLSVILISNILAVLLQSLASKLGIVTGRDLAQASSDHFSKPFGFVLWILAELAIIATDIAEVIGSAIALNLLFGIPLIWGVCITALDIFLVLFLQHKGFRYIEVIVITLMVTILVCFGAEMVMSHPDMQAIAKGFIPQSEIVTNPAMLYIALGILGATVMPHNLYLHSSIVQTRQYARTKEGKKEAIRFSFIDSTFSLTIALLINASILILAAAAFYTTGQHNVAGIEDAYKLLNPTLGSSIASTVFAVALLASGQNSTLTGTLAGQIVMEGFLNIRLKPVVRRLLTRVLAIVPAVIITALYGANGINELLIFSQVILSMQLSFAVIPLVMFTSDKEKMGEFVNPSWLKIISWAVAIFIAILNIYLLFYTITTL</sequence>
<keyword id="KW-1003">Cell membrane</keyword>
<keyword id="KW-0406">Ion transport</keyword>
<keyword id="KW-0472">Membrane</keyword>
<keyword id="KW-0769">Symport</keyword>
<keyword id="KW-0812">Transmembrane</keyword>
<keyword id="KW-1133">Transmembrane helix</keyword>
<keyword id="KW-0813">Transport</keyword>
<protein>
    <recommendedName>
        <fullName evidence="1">Divalent metal cation transporter MntH</fullName>
    </recommendedName>
</protein>
<evidence type="ECO:0000255" key="1">
    <source>
        <dbReference type="HAMAP-Rule" id="MF_00221"/>
    </source>
</evidence>
<name>MNTH_LISW6</name>
<proteinExistence type="inferred from homology"/>
<reference key="1">
    <citation type="journal article" date="2006" name="J. Bacteriol.">
        <title>Whole-genome sequence of Listeria welshimeri reveals common steps in genome reduction with Listeria innocua as compared to Listeria monocytogenes.</title>
        <authorList>
            <person name="Hain T."/>
            <person name="Steinweg C."/>
            <person name="Kuenne C.T."/>
            <person name="Billion A."/>
            <person name="Ghai R."/>
            <person name="Chatterjee S.S."/>
            <person name="Domann E."/>
            <person name="Kaerst U."/>
            <person name="Goesmann A."/>
            <person name="Bekel T."/>
            <person name="Bartels D."/>
            <person name="Kaiser O."/>
            <person name="Meyer F."/>
            <person name="Puehler A."/>
            <person name="Weisshaar B."/>
            <person name="Wehland J."/>
            <person name="Liang C."/>
            <person name="Dandekar T."/>
            <person name="Lampidis R."/>
            <person name="Kreft J."/>
            <person name="Goebel W."/>
            <person name="Chakraborty T."/>
        </authorList>
    </citation>
    <scope>NUCLEOTIDE SEQUENCE [LARGE SCALE GENOMIC DNA]</scope>
    <source>
        <strain>ATCC 35897 / DSM 20650 / CCUG 15529 / CIP 8149 / NCTC 11857 / SLCC 5334 / V8</strain>
    </source>
</reference>
<comment type="function">
    <text evidence="1">H(+)-stimulated, divalent metal cation uptake system.</text>
</comment>
<comment type="subcellular location">
    <subcellularLocation>
        <location evidence="1">Cell membrane</location>
        <topology evidence="1">Multi-pass membrane protein</topology>
    </subcellularLocation>
</comment>
<comment type="similarity">
    <text evidence="1">Belongs to the NRAMP family.</text>
</comment>
<dbReference type="EMBL" id="AM263198">
    <property type="protein sequence ID" value="CAK20859.1"/>
    <property type="molecule type" value="Genomic_DNA"/>
</dbReference>
<dbReference type="RefSeq" id="WP_011702237.1">
    <property type="nucleotide sequence ID" value="NC_008555.1"/>
</dbReference>
<dbReference type="SMR" id="A0AIM7"/>
<dbReference type="STRING" id="386043.lwe1441"/>
<dbReference type="GeneID" id="61189317"/>
<dbReference type="KEGG" id="lwe:lwe1441"/>
<dbReference type="eggNOG" id="COG1914">
    <property type="taxonomic scope" value="Bacteria"/>
</dbReference>
<dbReference type="HOGENOM" id="CLU_020088_2_0_9"/>
<dbReference type="OrthoDB" id="9787548at2"/>
<dbReference type="Proteomes" id="UP000000779">
    <property type="component" value="Chromosome"/>
</dbReference>
<dbReference type="GO" id="GO:0005886">
    <property type="term" value="C:plasma membrane"/>
    <property type="evidence" value="ECO:0007669"/>
    <property type="project" value="UniProtKB-SubCell"/>
</dbReference>
<dbReference type="GO" id="GO:0015086">
    <property type="term" value="F:cadmium ion transmembrane transporter activity"/>
    <property type="evidence" value="ECO:0007669"/>
    <property type="project" value="TreeGrafter"/>
</dbReference>
<dbReference type="GO" id="GO:0005384">
    <property type="term" value="F:manganese ion transmembrane transporter activity"/>
    <property type="evidence" value="ECO:0007669"/>
    <property type="project" value="TreeGrafter"/>
</dbReference>
<dbReference type="GO" id="GO:0046872">
    <property type="term" value="F:metal ion binding"/>
    <property type="evidence" value="ECO:0007669"/>
    <property type="project" value="UniProtKB-UniRule"/>
</dbReference>
<dbReference type="GO" id="GO:0015293">
    <property type="term" value="F:symporter activity"/>
    <property type="evidence" value="ECO:0007669"/>
    <property type="project" value="UniProtKB-UniRule"/>
</dbReference>
<dbReference type="GO" id="GO:0034755">
    <property type="term" value="P:iron ion transmembrane transport"/>
    <property type="evidence" value="ECO:0007669"/>
    <property type="project" value="TreeGrafter"/>
</dbReference>
<dbReference type="HAMAP" id="MF_00221">
    <property type="entry name" value="NRAMP"/>
    <property type="match status" value="1"/>
</dbReference>
<dbReference type="InterPro" id="IPR001046">
    <property type="entry name" value="NRAMP_fam"/>
</dbReference>
<dbReference type="NCBIfam" id="TIGR01197">
    <property type="entry name" value="nramp"/>
    <property type="match status" value="1"/>
</dbReference>
<dbReference type="NCBIfam" id="NF037982">
    <property type="entry name" value="Nramp_1"/>
    <property type="match status" value="1"/>
</dbReference>
<dbReference type="NCBIfam" id="NF001923">
    <property type="entry name" value="PRK00701.1"/>
    <property type="match status" value="1"/>
</dbReference>
<dbReference type="PANTHER" id="PTHR11706:SF33">
    <property type="entry name" value="NATURAL RESISTANCE-ASSOCIATED MACROPHAGE PROTEIN 2"/>
    <property type="match status" value="1"/>
</dbReference>
<dbReference type="PANTHER" id="PTHR11706">
    <property type="entry name" value="SOLUTE CARRIER PROTEIN FAMILY 11 MEMBER"/>
    <property type="match status" value="1"/>
</dbReference>
<dbReference type="Pfam" id="PF01566">
    <property type="entry name" value="Nramp"/>
    <property type="match status" value="1"/>
</dbReference>
<dbReference type="PRINTS" id="PR00447">
    <property type="entry name" value="NATRESASSCMP"/>
</dbReference>
<organism>
    <name type="scientific">Listeria welshimeri serovar 6b (strain ATCC 35897 / DSM 20650 / CCUG 15529 / CIP 8149 / NCTC 11857 / SLCC 5334 / V8)</name>
    <dbReference type="NCBI Taxonomy" id="386043"/>
    <lineage>
        <taxon>Bacteria</taxon>
        <taxon>Bacillati</taxon>
        <taxon>Bacillota</taxon>
        <taxon>Bacilli</taxon>
        <taxon>Bacillales</taxon>
        <taxon>Listeriaceae</taxon>
        <taxon>Listeria</taxon>
    </lineage>
</organism>
<gene>
    <name evidence="1" type="primary">mntH</name>
    <name type="ordered locus">lwe1441</name>
</gene>
<accession>A0AIM7</accession>
<feature type="chain" id="PRO_1000024105" description="Divalent metal cation transporter MntH">
    <location>
        <begin position="1"/>
        <end position="448"/>
    </location>
</feature>
<feature type="transmembrane region" description="Helical" evidence="1">
    <location>
        <begin position="41"/>
        <end position="61"/>
    </location>
</feature>
<feature type="transmembrane region" description="Helical" evidence="1">
    <location>
        <begin position="69"/>
        <end position="89"/>
    </location>
</feature>
<feature type="transmembrane region" description="Helical" evidence="1">
    <location>
        <begin position="117"/>
        <end position="137"/>
    </location>
</feature>
<feature type="transmembrane region" description="Helical" evidence="1">
    <location>
        <begin position="147"/>
        <end position="167"/>
    </location>
</feature>
<feature type="transmembrane region" description="Helical" evidence="1">
    <location>
        <begin position="176"/>
        <end position="196"/>
    </location>
</feature>
<feature type="transmembrane region" description="Helical" evidence="1">
    <location>
        <begin position="215"/>
        <end position="235"/>
    </location>
</feature>
<feature type="transmembrane region" description="Helical" evidence="1">
    <location>
        <begin position="270"/>
        <end position="290"/>
    </location>
</feature>
<feature type="transmembrane region" description="Helical" evidence="1">
    <location>
        <begin position="307"/>
        <end position="327"/>
    </location>
</feature>
<feature type="transmembrane region" description="Helical" evidence="1">
    <location>
        <begin position="363"/>
        <end position="383"/>
    </location>
</feature>
<feature type="transmembrane region" description="Helical" evidence="1">
    <location>
        <begin position="384"/>
        <end position="404"/>
    </location>
</feature>
<feature type="transmembrane region" description="Helical" evidence="1">
    <location>
        <begin position="424"/>
        <end position="444"/>
    </location>
</feature>